<evidence type="ECO:0000255" key="1">
    <source>
        <dbReference type="HAMAP-Rule" id="MF_00050"/>
    </source>
</evidence>
<comment type="function">
    <text evidence="1">Associates with the EF-Tu.GDP complex and induces the exchange of GDP to GTP. It remains bound to the aminoacyl-tRNA.EF-Tu.GTP complex up to the GTP hydrolysis stage on the ribosome.</text>
</comment>
<comment type="subcellular location">
    <subcellularLocation>
        <location evidence="1">Cytoplasm</location>
    </subcellularLocation>
</comment>
<comment type="similarity">
    <text evidence="1">Belongs to the EF-Ts family.</text>
</comment>
<proteinExistence type="inferred from homology"/>
<gene>
    <name evidence="1" type="primary">tsf</name>
    <name type="ordered locus">MS53_0414</name>
</gene>
<accession>Q4A5Z5</accession>
<sequence>MSQNKLELIKELRQRTNSALGDVKKALEATDYNIEAAIKWLKENGIVKAAKKSGRLASEGVVSAHGTPTQSLLLEVNSETDFVAQNEKFMTLVKNVTESVFKAGASTLEEALQVKVSDSETVEQALTDATAVIGEKITLRRVLASKAKEGHVLGTYLHANNRVAAVVEVTGSNSEVAKNVAMHLAAMNPEFVLVSDIPEDRMQEIKKAFEAPKDFDKKPAQIQERILSGWLDKQLGEVVLEKQPFVMEDSLTVAKYLANANAKLVSAHRYEVGEGLEKVQSNFAEEVASMTK</sequence>
<reference key="1">
    <citation type="journal article" date="2005" name="J. Bacteriol.">
        <title>Swine and poultry pathogens: the complete genome sequences of two strains of Mycoplasma hyopneumoniae and a strain of Mycoplasma synoviae.</title>
        <authorList>
            <person name="Vasconcelos A.T.R."/>
            <person name="Ferreira H.B."/>
            <person name="Bizarro C.V."/>
            <person name="Bonatto S.L."/>
            <person name="Carvalho M.O."/>
            <person name="Pinto P.M."/>
            <person name="Almeida D.F."/>
            <person name="Almeida L.G.P."/>
            <person name="Almeida R."/>
            <person name="Alves-Junior L."/>
            <person name="Assuncao E.N."/>
            <person name="Azevedo V.A.C."/>
            <person name="Bogo M.R."/>
            <person name="Brigido M.M."/>
            <person name="Brocchi M."/>
            <person name="Burity H.A."/>
            <person name="Camargo A.A."/>
            <person name="Camargo S.S."/>
            <person name="Carepo M.S."/>
            <person name="Carraro D.M."/>
            <person name="de Mattos Cascardo J.C."/>
            <person name="Castro L.A."/>
            <person name="Cavalcanti G."/>
            <person name="Chemale G."/>
            <person name="Collevatti R.G."/>
            <person name="Cunha C.W."/>
            <person name="Dallagiovanna B."/>
            <person name="Dambros B.P."/>
            <person name="Dellagostin O.A."/>
            <person name="Falcao C."/>
            <person name="Fantinatti-Garboggini F."/>
            <person name="Felipe M.S.S."/>
            <person name="Fiorentin L."/>
            <person name="Franco G.R."/>
            <person name="Freitas N.S.A."/>
            <person name="Frias D."/>
            <person name="Grangeiro T.B."/>
            <person name="Grisard E.C."/>
            <person name="Guimaraes C.T."/>
            <person name="Hungria M."/>
            <person name="Jardim S.N."/>
            <person name="Krieger M.A."/>
            <person name="Laurino J.P."/>
            <person name="Lima L.F.A."/>
            <person name="Lopes M.I."/>
            <person name="Loreto E.L.S."/>
            <person name="Madeira H.M.F."/>
            <person name="Manfio G.P."/>
            <person name="Maranhao A.Q."/>
            <person name="Martinkovics C.T."/>
            <person name="Medeiros S.R.B."/>
            <person name="Moreira M.A.M."/>
            <person name="Neiva M."/>
            <person name="Ramalho-Neto C.E."/>
            <person name="Nicolas M.F."/>
            <person name="Oliveira S.C."/>
            <person name="Paixao R.F.C."/>
            <person name="Pedrosa F.O."/>
            <person name="Pena S.D.J."/>
            <person name="Pereira M."/>
            <person name="Pereira-Ferrari L."/>
            <person name="Piffer I."/>
            <person name="Pinto L.S."/>
            <person name="Potrich D.P."/>
            <person name="Salim A.C.M."/>
            <person name="Santos F.R."/>
            <person name="Schmitt R."/>
            <person name="Schneider M.P.C."/>
            <person name="Schrank A."/>
            <person name="Schrank I.S."/>
            <person name="Schuck A.F."/>
            <person name="Seuanez H.N."/>
            <person name="Silva D.W."/>
            <person name="Silva R."/>
            <person name="Silva S.C."/>
            <person name="Soares C.M.A."/>
            <person name="Souza K.R.L."/>
            <person name="Souza R.C."/>
            <person name="Staats C.C."/>
            <person name="Steffens M.B.R."/>
            <person name="Teixeira S.M.R."/>
            <person name="Urmenyi T.P."/>
            <person name="Vainstein M.H."/>
            <person name="Zuccherato L.W."/>
            <person name="Simpson A.J.G."/>
            <person name="Zaha A."/>
        </authorList>
    </citation>
    <scope>NUCLEOTIDE SEQUENCE [LARGE SCALE GENOMIC DNA]</scope>
    <source>
        <strain>53</strain>
    </source>
</reference>
<feature type="chain" id="PRO_0000241496" description="Elongation factor Ts">
    <location>
        <begin position="1"/>
        <end position="292"/>
    </location>
</feature>
<feature type="region of interest" description="Involved in Mg(2+) ion dislocation from EF-Tu" evidence="1">
    <location>
        <begin position="80"/>
        <end position="83"/>
    </location>
</feature>
<keyword id="KW-0963">Cytoplasm</keyword>
<keyword id="KW-0251">Elongation factor</keyword>
<keyword id="KW-0648">Protein biosynthesis</keyword>
<keyword id="KW-1185">Reference proteome</keyword>
<organism>
    <name type="scientific">Mycoplasmopsis synoviae (strain 53)</name>
    <name type="common">Mycoplasma synoviae</name>
    <dbReference type="NCBI Taxonomy" id="262723"/>
    <lineage>
        <taxon>Bacteria</taxon>
        <taxon>Bacillati</taxon>
        <taxon>Mycoplasmatota</taxon>
        <taxon>Mycoplasmoidales</taxon>
        <taxon>Metamycoplasmataceae</taxon>
        <taxon>Mycoplasmopsis</taxon>
    </lineage>
</organism>
<name>EFTS_MYCS5</name>
<dbReference type="EMBL" id="AE017245">
    <property type="protein sequence ID" value="AAZ43826.1"/>
    <property type="molecule type" value="Genomic_DNA"/>
</dbReference>
<dbReference type="RefSeq" id="WP_011283557.1">
    <property type="nucleotide sequence ID" value="NC_007294.1"/>
</dbReference>
<dbReference type="SMR" id="Q4A5Z5"/>
<dbReference type="STRING" id="262723.MS53_0414"/>
<dbReference type="KEGG" id="msy:MS53_0414"/>
<dbReference type="eggNOG" id="COG0264">
    <property type="taxonomic scope" value="Bacteria"/>
</dbReference>
<dbReference type="HOGENOM" id="CLU_047155_0_2_14"/>
<dbReference type="OrthoDB" id="9808348at2"/>
<dbReference type="Proteomes" id="UP000000549">
    <property type="component" value="Chromosome"/>
</dbReference>
<dbReference type="GO" id="GO:0005737">
    <property type="term" value="C:cytoplasm"/>
    <property type="evidence" value="ECO:0007669"/>
    <property type="project" value="UniProtKB-SubCell"/>
</dbReference>
<dbReference type="GO" id="GO:0003746">
    <property type="term" value="F:translation elongation factor activity"/>
    <property type="evidence" value="ECO:0007669"/>
    <property type="project" value="UniProtKB-UniRule"/>
</dbReference>
<dbReference type="CDD" id="cd14275">
    <property type="entry name" value="UBA_EF-Ts"/>
    <property type="match status" value="1"/>
</dbReference>
<dbReference type="FunFam" id="1.10.8.10:FF:000001">
    <property type="entry name" value="Elongation factor Ts"/>
    <property type="match status" value="1"/>
</dbReference>
<dbReference type="Gene3D" id="1.10.286.20">
    <property type="match status" value="1"/>
</dbReference>
<dbReference type="Gene3D" id="1.10.8.10">
    <property type="entry name" value="DNA helicase RuvA subunit, C-terminal domain"/>
    <property type="match status" value="1"/>
</dbReference>
<dbReference type="Gene3D" id="3.30.479.20">
    <property type="entry name" value="Elongation factor Ts, dimerisation domain"/>
    <property type="match status" value="2"/>
</dbReference>
<dbReference type="HAMAP" id="MF_00050">
    <property type="entry name" value="EF_Ts"/>
    <property type="match status" value="1"/>
</dbReference>
<dbReference type="InterPro" id="IPR036402">
    <property type="entry name" value="EF-Ts_dimer_sf"/>
</dbReference>
<dbReference type="InterPro" id="IPR001816">
    <property type="entry name" value="Transl_elong_EFTs/EF1B"/>
</dbReference>
<dbReference type="InterPro" id="IPR014039">
    <property type="entry name" value="Transl_elong_EFTs/EF1B_dimer"/>
</dbReference>
<dbReference type="InterPro" id="IPR018101">
    <property type="entry name" value="Transl_elong_Ts_CS"/>
</dbReference>
<dbReference type="InterPro" id="IPR009060">
    <property type="entry name" value="UBA-like_sf"/>
</dbReference>
<dbReference type="NCBIfam" id="TIGR00116">
    <property type="entry name" value="tsf"/>
    <property type="match status" value="1"/>
</dbReference>
<dbReference type="PANTHER" id="PTHR11741">
    <property type="entry name" value="ELONGATION FACTOR TS"/>
    <property type="match status" value="1"/>
</dbReference>
<dbReference type="PANTHER" id="PTHR11741:SF0">
    <property type="entry name" value="ELONGATION FACTOR TS, MITOCHONDRIAL"/>
    <property type="match status" value="1"/>
</dbReference>
<dbReference type="Pfam" id="PF00889">
    <property type="entry name" value="EF_TS"/>
    <property type="match status" value="1"/>
</dbReference>
<dbReference type="SUPFAM" id="SSF54713">
    <property type="entry name" value="Elongation factor Ts (EF-Ts), dimerisation domain"/>
    <property type="match status" value="2"/>
</dbReference>
<dbReference type="SUPFAM" id="SSF46934">
    <property type="entry name" value="UBA-like"/>
    <property type="match status" value="1"/>
</dbReference>
<dbReference type="PROSITE" id="PS01126">
    <property type="entry name" value="EF_TS_1"/>
    <property type="match status" value="1"/>
</dbReference>
<dbReference type="PROSITE" id="PS01127">
    <property type="entry name" value="EF_TS_2"/>
    <property type="match status" value="1"/>
</dbReference>
<protein>
    <recommendedName>
        <fullName evidence="1">Elongation factor Ts</fullName>
        <shortName evidence="1">EF-Ts</shortName>
    </recommendedName>
</protein>